<reference key="1">
    <citation type="journal article" date="2013" name="Nature">
        <title>The zebrafish reference genome sequence and its relationship to the human genome.</title>
        <authorList>
            <person name="Howe K."/>
            <person name="Clark M.D."/>
            <person name="Torroja C.F."/>
            <person name="Torrance J."/>
            <person name="Berthelot C."/>
            <person name="Muffato M."/>
            <person name="Collins J.E."/>
            <person name="Humphray S."/>
            <person name="McLaren K."/>
            <person name="Matthews L."/>
            <person name="McLaren S."/>
            <person name="Sealy I."/>
            <person name="Caccamo M."/>
            <person name="Churcher C."/>
            <person name="Scott C."/>
            <person name="Barrett J.C."/>
            <person name="Koch R."/>
            <person name="Rauch G.J."/>
            <person name="White S."/>
            <person name="Chow W."/>
            <person name="Kilian B."/>
            <person name="Quintais L.T."/>
            <person name="Guerra-Assuncao J.A."/>
            <person name="Zhou Y."/>
            <person name="Gu Y."/>
            <person name="Yen J."/>
            <person name="Vogel J.H."/>
            <person name="Eyre T."/>
            <person name="Redmond S."/>
            <person name="Banerjee R."/>
            <person name="Chi J."/>
            <person name="Fu B."/>
            <person name="Langley E."/>
            <person name="Maguire S.F."/>
            <person name="Laird G.K."/>
            <person name="Lloyd D."/>
            <person name="Kenyon E."/>
            <person name="Donaldson S."/>
            <person name="Sehra H."/>
            <person name="Almeida-King J."/>
            <person name="Loveland J."/>
            <person name="Trevanion S."/>
            <person name="Jones M."/>
            <person name="Quail M."/>
            <person name="Willey D."/>
            <person name="Hunt A."/>
            <person name="Burton J."/>
            <person name="Sims S."/>
            <person name="McLay K."/>
            <person name="Plumb B."/>
            <person name="Davis J."/>
            <person name="Clee C."/>
            <person name="Oliver K."/>
            <person name="Clark R."/>
            <person name="Riddle C."/>
            <person name="Elliot D."/>
            <person name="Threadgold G."/>
            <person name="Harden G."/>
            <person name="Ware D."/>
            <person name="Begum S."/>
            <person name="Mortimore B."/>
            <person name="Kerry G."/>
            <person name="Heath P."/>
            <person name="Phillimore B."/>
            <person name="Tracey A."/>
            <person name="Corby N."/>
            <person name="Dunn M."/>
            <person name="Johnson C."/>
            <person name="Wood J."/>
            <person name="Clark S."/>
            <person name="Pelan S."/>
            <person name="Griffiths G."/>
            <person name="Smith M."/>
            <person name="Glithero R."/>
            <person name="Howden P."/>
            <person name="Barker N."/>
            <person name="Lloyd C."/>
            <person name="Stevens C."/>
            <person name="Harley J."/>
            <person name="Holt K."/>
            <person name="Panagiotidis G."/>
            <person name="Lovell J."/>
            <person name="Beasley H."/>
            <person name="Henderson C."/>
            <person name="Gordon D."/>
            <person name="Auger K."/>
            <person name="Wright D."/>
            <person name="Collins J."/>
            <person name="Raisen C."/>
            <person name="Dyer L."/>
            <person name="Leung K."/>
            <person name="Robertson L."/>
            <person name="Ambridge K."/>
            <person name="Leongamornlert D."/>
            <person name="McGuire S."/>
            <person name="Gilderthorp R."/>
            <person name="Griffiths C."/>
            <person name="Manthravadi D."/>
            <person name="Nichol S."/>
            <person name="Barker G."/>
            <person name="Whitehead S."/>
            <person name="Kay M."/>
            <person name="Brown J."/>
            <person name="Murnane C."/>
            <person name="Gray E."/>
            <person name="Humphries M."/>
            <person name="Sycamore N."/>
            <person name="Barker D."/>
            <person name="Saunders D."/>
            <person name="Wallis J."/>
            <person name="Babbage A."/>
            <person name="Hammond S."/>
            <person name="Mashreghi-Mohammadi M."/>
            <person name="Barr L."/>
            <person name="Martin S."/>
            <person name="Wray P."/>
            <person name="Ellington A."/>
            <person name="Matthews N."/>
            <person name="Ellwood M."/>
            <person name="Woodmansey R."/>
            <person name="Clark G."/>
            <person name="Cooper J."/>
            <person name="Tromans A."/>
            <person name="Grafham D."/>
            <person name="Skuce C."/>
            <person name="Pandian R."/>
            <person name="Andrews R."/>
            <person name="Harrison E."/>
            <person name="Kimberley A."/>
            <person name="Garnett J."/>
            <person name="Fosker N."/>
            <person name="Hall R."/>
            <person name="Garner P."/>
            <person name="Kelly D."/>
            <person name="Bird C."/>
            <person name="Palmer S."/>
            <person name="Gehring I."/>
            <person name="Berger A."/>
            <person name="Dooley C.M."/>
            <person name="Ersan-Urun Z."/>
            <person name="Eser C."/>
            <person name="Geiger H."/>
            <person name="Geisler M."/>
            <person name="Karotki L."/>
            <person name="Kirn A."/>
            <person name="Konantz J."/>
            <person name="Konantz M."/>
            <person name="Oberlander M."/>
            <person name="Rudolph-Geiger S."/>
            <person name="Teucke M."/>
            <person name="Lanz C."/>
            <person name="Raddatz G."/>
            <person name="Osoegawa K."/>
            <person name="Zhu B."/>
            <person name="Rapp A."/>
            <person name="Widaa S."/>
            <person name="Langford C."/>
            <person name="Yang F."/>
            <person name="Schuster S.C."/>
            <person name="Carter N.P."/>
            <person name="Harrow J."/>
            <person name="Ning Z."/>
            <person name="Herrero J."/>
            <person name="Searle S.M."/>
            <person name="Enright A."/>
            <person name="Geisler R."/>
            <person name="Plasterk R.H."/>
            <person name="Lee C."/>
            <person name="Westerfield M."/>
            <person name="de Jong P.J."/>
            <person name="Zon L.I."/>
            <person name="Postlethwait J.H."/>
            <person name="Nusslein-Volhard C."/>
            <person name="Hubbard T.J."/>
            <person name="Roest Crollius H."/>
            <person name="Rogers J."/>
            <person name="Stemple D.L."/>
        </authorList>
    </citation>
    <scope>NUCLEOTIDE SEQUENCE [LARGE SCALE GENOMIC DNA]</scope>
    <source>
        <strain>Tuebingen</strain>
    </source>
</reference>
<reference key="2">
    <citation type="journal article" date="2015" name="Neurotoxicol. Teratol.">
        <title>2-Bromopalmitate impairs neural stem/progenitor cell proliferation, promotes cell apoptosis and induces malformation in zebrafish embryonic brain.</title>
        <authorList>
            <person name="Wang C."/>
            <person name="Chen X."/>
            <person name="Shi W."/>
            <person name="Wang F."/>
            <person name="Du Z."/>
            <person name="Li X."/>
            <person name="Yao Y."/>
            <person name="Liu T."/>
            <person name="Shao T."/>
            <person name="Li G."/>
            <person name="Hao A."/>
        </authorList>
    </citation>
    <scope>DEVELOPMENTAL STAGE</scope>
</reference>
<reference key="3">
    <citation type="journal article" date="2016" name="Biochem. Biophys. Res. Commun.">
        <title>Protein palmitoylation activate zygotic gene expression during the maternal-to-zygotic transition.</title>
        <authorList>
            <person name="Du Z."/>
            <person name="Chen X."/>
            <person name="Li X."/>
            <person name="He K."/>
            <person name="Ji S."/>
            <person name="Shi W."/>
            <person name="Hao A."/>
        </authorList>
    </citation>
    <scope>DEVELOPMENTAL STAGE</scope>
</reference>
<sequence>MGKLKLLNTIAPAYFYAATVVTFALHFLLFTPTIFQSSDVTINPAMLAHISIFLFLMGNALGNYIMTIRNPSESANETVIPVCSPDCPDRIDAHYLLNGRHFCKVCKKVILKRDHHCFFTGNCIGNRNMRYFIMFSIYTSSSCLYSLVIGVAYLTIEYSISFENPLTFLTLLPLSTGYFFLGLISGLQFFLVIMLYIWLGIGLVSVGFCCQQLLLVARGQTWCELQKGQLSECRGTWRANLTDVFGSHWVLGLFVPVPTVETVPGNWQVYHDHKHD</sequence>
<name>ZDH22_DANRE</name>
<gene>
    <name type="primary">zdhhc22</name>
    <name evidence="8" type="synonym">dhhc22</name>
</gene>
<accession>X1WBB5</accession>
<organism>
    <name type="scientific">Danio rerio</name>
    <name type="common">Zebrafish</name>
    <name type="synonym">Brachydanio rerio</name>
    <dbReference type="NCBI Taxonomy" id="7955"/>
    <lineage>
        <taxon>Eukaryota</taxon>
        <taxon>Metazoa</taxon>
        <taxon>Chordata</taxon>
        <taxon>Craniata</taxon>
        <taxon>Vertebrata</taxon>
        <taxon>Euteleostomi</taxon>
        <taxon>Actinopterygii</taxon>
        <taxon>Neopterygii</taxon>
        <taxon>Teleostei</taxon>
        <taxon>Ostariophysi</taxon>
        <taxon>Cypriniformes</taxon>
        <taxon>Danionidae</taxon>
        <taxon>Danioninae</taxon>
        <taxon>Danio</taxon>
    </lineage>
</organism>
<proteinExistence type="evidence at transcript level"/>
<protein>
    <recommendedName>
        <fullName evidence="9">Palmitoyltransferase ZDHHC22</fullName>
        <ecNumber evidence="3">2.3.1.225</ecNumber>
    </recommendedName>
    <alternativeName>
        <fullName evidence="8">DHHC domain-containing cysteine-rich protein 22</fullName>
    </alternativeName>
    <alternativeName>
        <fullName>Zinc finger DHHC domain-containing protein 22</fullName>
    </alternativeName>
</protein>
<evidence type="ECO:0000250" key="1">
    <source>
        <dbReference type="UniProtKB" id="A0PK84"/>
    </source>
</evidence>
<evidence type="ECO:0000250" key="2">
    <source>
        <dbReference type="UniProtKB" id="Q8IUH5"/>
    </source>
</evidence>
<evidence type="ECO:0000250" key="3">
    <source>
        <dbReference type="UniProtKB" id="Q8N966"/>
    </source>
</evidence>
<evidence type="ECO:0000255" key="4"/>
<evidence type="ECO:0000255" key="5">
    <source>
        <dbReference type="PROSITE-ProRule" id="PRU00067"/>
    </source>
</evidence>
<evidence type="ECO:0000269" key="6">
    <source>
    </source>
</evidence>
<evidence type="ECO:0000269" key="7">
    <source>
    </source>
</evidence>
<evidence type="ECO:0000303" key="8">
    <source>
    </source>
</evidence>
<evidence type="ECO:0000305" key="9"/>
<keyword id="KW-0012">Acyltransferase</keyword>
<keyword id="KW-0256">Endoplasmic reticulum</keyword>
<keyword id="KW-0333">Golgi apparatus</keyword>
<keyword id="KW-0449">Lipoprotein</keyword>
<keyword id="KW-0472">Membrane</keyword>
<keyword id="KW-0564">Palmitate</keyword>
<keyword id="KW-1185">Reference proteome</keyword>
<keyword id="KW-0808">Transferase</keyword>
<keyword id="KW-0812">Transmembrane</keyword>
<keyword id="KW-1133">Transmembrane helix</keyword>
<comment type="function">
    <text evidence="1 3">Palmitoyltransferase that could catalyze the addition of palmitate onto various protein substrates and be involved in a variety of cellular processes.</text>
</comment>
<comment type="catalytic activity">
    <reaction evidence="3">
        <text>L-cysteinyl-[protein] + hexadecanoyl-CoA = S-hexadecanoyl-L-cysteinyl-[protein] + CoA</text>
        <dbReference type="Rhea" id="RHEA:36683"/>
        <dbReference type="Rhea" id="RHEA-COMP:10131"/>
        <dbReference type="Rhea" id="RHEA-COMP:11032"/>
        <dbReference type="ChEBI" id="CHEBI:29950"/>
        <dbReference type="ChEBI" id="CHEBI:57287"/>
        <dbReference type="ChEBI" id="CHEBI:57379"/>
        <dbReference type="ChEBI" id="CHEBI:74151"/>
        <dbReference type="EC" id="2.3.1.225"/>
    </reaction>
    <physiologicalReaction direction="left-to-right" evidence="3">
        <dbReference type="Rhea" id="RHEA:36684"/>
    </physiologicalReaction>
</comment>
<comment type="subcellular location">
    <subcellularLocation>
        <location evidence="3">Endoplasmic reticulum membrane</location>
        <topology evidence="4">Multi-pass membrane protein</topology>
    </subcellularLocation>
    <subcellularLocation>
        <location evidence="3">Golgi apparatus membrane</location>
        <topology evidence="4">Multi-pass membrane protein</topology>
    </subcellularLocation>
</comment>
<comment type="developmental stage">
    <text evidence="6 7">Probably maternally supplied, the zygotic expression becomes significant at 4.0 hpf and remains constant until 24 hpf.</text>
</comment>
<comment type="domain">
    <text evidence="2">The DHHC domain is required for palmitoyltransferase activity.</text>
</comment>
<comment type="similarity">
    <text evidence="9">Belongs to the DHHC palmitoyltransferase family.</text>
</comment>
<feature type="chain" id="PRO_0000451129" description="Palmitoyltransferase ZDHHC22">
    <location>
        <begin position="1"/>
        <end position="276"/>
    </location>
</feature>
<feature type="topological domain" description="Cytoplasmic" evidence="9">
    <location>
        <begin position="1"/>
        <end position="9"/>
    </location>
</feature>
<feature type="transmembrane region" description="Helical" evidence="4">
    <location>
        <begin position="10"/>
        <end position="30"/>
    </location>
</feature>
<feature type="topological domain" description="Lumenal" evidence="9">
    <location>
        <begin position="31"/>
        <end position="45"/>
    </location>
</feature>
<feature type="transmembrane region" description="Helical" evidence="4">
    <location>
        <begin position="46"/>
        <end position="66"/>
    </location>
</feature>
<feature type="topological domain" description="Cytoplasmic" evidence="9">
    <location>
        <begin position="67"/>
        <end position="131"/>
    </location>
</feature>
<feature type="transmembrane region" description="Helical" evidence="4">
    <location>
        <begin position="132"/>
        <end position="152"/>
    </location>
</feature>
<feature type="topological domain" description="Lumenal" evidence="9">
    <location>
        <begin position="153"/>
        <end position="165"/>
    </location>
</feature>
<feature type="transmembrane region" description="Helical" evidence="4">
    <location>
        <begin position="166"/>
        <end position="186"/>
    </location>
</feature>
<feature type="topological domain" description="Cytoplasmic" evidence="9">
    <location>
        <begin position="187"/>
        <end position="188"/>
    </location>
</feature>
<feature type="transmembrane region" description="Helical" evidence="4">
    <location>
        <begin position="189"/>
        <end position="209"/>
    </location>
</feature>
<feature type="topological domain" description="Lumenal" evidence="9">
    <location>
        <begin position="210"/>
        <end position="276"/>
    </location>
</feature>
<feature type="domain" description="DHHC" evidence="5">
    <location>
        <begin position="101"/>
        <end position="137"/>
    </location>
</feature>
<feature type="active site" description="S-palmitoyl cysteine intermediate" evidence="5">
    <location>
        <position position="117"/>
    </location>
</feature>
<dbReference type="EC" id="2.3.1.225" evidence="3"/>
<dbReference type="EMBL" id="BX511263">
    <property type="status" value="NOT_ANNOTATED_CDS"/>
    <property type="molecule type" value="Genomic_DNA"/>
</dbReference>
<dbReference type="EMBL" id="BX546474">
    <property type="status" value="NOT_ANNOTATED_CDS"/>
    <property type="molecule type" value="Genomic_DNA"/>
</dbReference>
<dbReference type="EMBL" id="CR847955">
    <property type="status" value="NOT_ANNOTATED_CDS"/>
    <property type="molecule type" value="Genomic_DNA"/>
</dbReference>
<dbReference type="FunCoup" id="X1WBB5">
    <property type="interactions" value="1222"/>
</dbReference>
<dbReference type="STRING" id="7955.ENSDARP00000127506"/>
<dbReference type="PaxDb" id="7955-ENSDARP00000098454"/>
<dbReference type="Ensembl" id="ENSDART00000156195">
    <property type="protein sequence ID" value="ENSDARP00000127506"/>
    <property type="gene ID" value="ENSDARG00000075170"/>
</dbReference>
<dbReference type="Ensembl" id="ENSDART00000180635">
    <property type="protein sequence ID" value="ENSDARP00000149557"/>
    <property type="gene ID" value="ENSDARG00000112028"/>
</dbReference>
<dbReference type="eggNOG" id="KOG1311">
    <property type="taxonomic scope" value="Eukaryota"/>
</dbReference>
<dbReference type="HOGENOM" id="CLU_027721_5_3_1"/>
<dbReference type="InParanoid" id="X1WBB5"/>
<dbReference type="OMA" id="GQTWCQL"/>
<dbReference type="PRO" id="PR:X1WBB5"/>
<dbReference type="Proteomes" id="UP000000437">
    <property type="component" value="Unplaced"/>
</dbReference>
<dbReference type="Bgee" id="ENSDARG00000075170">
    <property type="expression patterns" value="Expressed in brain and 3 other cell types or tissues"/>
</dbReference>
<dbReference type="GO" id="GO:0005789">
    <property type="term" value="C:endoplasmic reticulum membrane"/>
    <property type="evidence" value="ECO:0007669"/>
    <property type="project" value="UniProtKB-SubCell"/>
</dbReference>
<dbReference type="GO" id="GO:0000139">
    <property type="term" value="C:Golgi membrane"/>
    <property type="evidence" value="ECO:0007669"/>
    <property type="project" value="UniProtKB-SubCell"/>
</dbReference>
<dbReference type="GO" id="GO:0019706">
    <property type="term" value="F:protein-cysteine S-palmitoyltransferase activity"/>
    <property type="evidence" value="ECO:0007669"/>
    <property type="project" value="UniProtKB-EC"/>
</dbReference>
<dbReference type="InterPro" id="IPR001594">
    <property type="entry name" value="Palmitoyltrfase_DHHC"/>
</dbReference>
<dbReference type="InterPro" id="IPR039859">
    <property type="entry name" value="PFA4/ZDH16/20/ERF2-like"/>
</dbReference>
<dbReference type="PANTHER" id="PTHR12246">
    <property type="entry name" value="PALMITOYLTRANSFERASE ZDHHC16"/>
    <property type="match status" value="1"/>
</dbReference>
<dbReference type="Pfam" id="PF01529">
    <property type="entry name" value="DHHC"/>
    <property type="match status" value="1"/>
</dbReference>
<dbReference type="PROSITE" id="PS50216">
    <property type="entry name" value="DHHC"/>
    <property type="match status" value="1"/>
</dbReference>